<accession>P36315</accession>
<feature type="chain" id="PRO_0000142831" description="Non-structural protein V">
    <location>
        <begin position="1"/>
        <end position="225"/>
    </location>
</feature>
<feature type="region of interest" description="Disordered" evidence="2">
    <location>
        <begin position="145"/>
        <end position="172"/>
    </location>
</feature>
<feature type="compositionally biased region" description="Polar residues" evidence="2">
    <location>
        <begin position="145"/>
        <end position="157"/>
    </location>
</feature>
<feature type="compositionally biased region" description="Basic and acidic residues" evidence="2">
    <location>
        <begin position="158"/>
        <end position="169"/>
    </location>
</feature>
<feature type="binding site" evidence="1">
    <location>
        <position position="174"/>
    </location>
    <ligand>
        <name>Zn(2+)</name>
        <dbReference type="ChEBI" id="CHEBI:29105"/>
        <label>1</label>
    </ligand>
</feature>
<feature type="binding site" evidence="1">
    <location>
        <position position="193"/>
    </location>
    <ligand>
        <name>Zn(2+)</name>
        <dbReference type="ChEBI" id="CHEBI:29105"/>
        <label>1</label>
    </ligand>
</feature>
<feature type="binding site" evidence="1">
    <location>
        <position position="197"/>
    </location>
    <ligand>
        <name>Zn(2+)</name>
        <dbReference type="ChEBI" id="CHEBI:29105"/>
        <label>2</label>
    </ligand>
</feature>
<feature type="binding site" evidence="1">
    <location>
        <position position="209"/>
    </location>
    <ligand>
        <name>Zn(2+)</name>
        <dbReference type="ChEBI" id="CHEBI:29105"/>
        <label>2</label>
    </ligand>
</feature>
<feature type="binding site" evidence="1">
    <location>
        <position position="211"/>
    </location>
    <ligand>
        <name>Zn(2+)</name>
        <dbReference type="ChEBI" id="CHEBI:29105"/>
        <label>2</label>
    </ligand>
</feature>
<feature type="binding site" evidence="1">
    <location>
        <position position="214"/>
    </location>
    <ligand>
        <name>Zn(2+)</name>
        <dbReference type="ChEBI" id="CHEBI:29105"/>
        <label>2</label>
    </ligand>
</feature>
<feature type="binding site" evidence="1">
    <location>
        <position position="218"/>
    </location>
    <ligand>
        <name>Zn(2+)</name>
        <dbReference type="ChEBI" id="CHEBI:29105"/>
        <label>1</label>
    </ligand>
</feature>
<feature type="binding site" evidence="1">
    <location>
        <position position="221"/>
    </location>
    <ligand>
        <name>Zn(2+)</name>
        <dbReference type="ChEBI" id="CHEBI:29105"/>
        <label>1</label>
    </ligand>
</feature>
<name>V_SV41</name>
<gene>
    <name type="primary">P/V</name>
</gene>
<comment type="function">
    <text evidence="1 3">Plays an essential role in the inhibition of host immune response. Prevents the establishment of cellular antiviral state by blocking interferon-alpha/beta (IFN-alpha/beta) production and signaling pathway (By similarity). Interacts with host IFIH1/MDA5 and DHX58/LGP2 to inhibit the transduction pathway involved in the activation of IFN-beta promoter, thus protecting the virus against cell antiviral state. Efficiently blocks type I and type II IFN signaling following infection, probably by targeting host STAT1 for proteasomal degradation.</text>
</comment>
<comment type="subcellular location">
    <subcellularLocation>
        <location evidence="1">Host cytoplasm</location>
    </subcellularLocation>
</comment>
<comment type="RNA editing">
    <location>
        <position position="164" evidence="4"/>
    </location>
    <text>Partially edited. RNA editing at this position consists of an insertion of two guanine nucleotides. The sequence displayed here is the V protein, derived from the unedited RNA. The edited RNA gives rise to the P protein (AC Q86606).</text>
</comment>
<comment type="similarity">
    <text evidence="5">Belongs to the paramyxoviruses V protein family.</text>
</comment>
<evidence type="ECO:0000250" key="1"/>
<evidence type="ECO:0000256" key="2">
    <source>
        <dbReference type="SAM" id="MobiDB-lite"/>
    </source>
</evidence>
<evidence type="ECO:0000269" key="3">
    <source>
    </source>
</evidence>
<evidence type="ECO:0000269" key="4">
    <source>
    </source>
</evidence>
<evidence type="ECO:0000305" key="5"/>
<reference key="1">
    <citation type="journal article" date="1993" name="J. Gen. Virol.">
        <title>Sequence determination of the P gene of simian virus 41: presence of irregular deletions near the RNA-editing sites of paramyxoviruses.</title>
        <authorList>
            <person name="Kawano M."/>
            <person name="Tsurudome M."/>
            <person name="Oki N."/>
            <person name="Nishio M."/>
            <person name="Komada H."/>
            <person name="Matsumura H."/>
            <person name="Kusagawa S."/>
            <person name="Ohta H."/>
            <person name="Ito Y."/>
        </authorList>
    </citation>
    <scope>NUCLEOTIDE SEQUENCE [GENOMIC RNA]</scope>
    <scope>RNA EDITING</scope>
    <source>
        <strain>Toshiba/Chanock</strain>
    </source>
</reference>
<reference key="2">
    <citation type="journal article" date="2001" name="J. Virol.">
        <title>High resistance of human parainfluenza type 2 virus protein-expressing cells to the antiviral and anti-cell proliferative activities of alpha/beta interferons: cysteine-rich V-specific domain is required for high resistance to the interferons.</title>
        <authorList>
            <person name="Nishio M."/>
            <person name="Tsurudome M."/>
            <person name="Ito M."/>
            <person name="Kawano M."/>
            <person name="Komada H."/>
            <person name="Ito Y."/>
        </authorList>
    </citation>
    <scope>FUNCTION</scope>
</reference>
<protein>
    <recommendedName>
        <fullName>Non-structural protein V</fullName>
    </recommendedName>
</protein>
<sequence>MAEEPTYTAEQVNDVVHAGLGTVDFFLSRPVDGQSSLGKGSVPPGITAVLTNAAELKAKTAAAAPVKPKRKKIQHMTPAYTIADNGDPNRLPANTPIANPLIPIERPPGRMTDLDLATGTVTQGTYKGVELAKAGKNALLTRFSSGPSLTDQASSKDPNFKRGGEIDGRHKGRHRREWSIAWVGDEVKVYEWCNPTCAPVTATDRKFSCTCGTCPDRCGECEGDN</sequence>
<keyword id="KW-1035">Host cytoplasm</keyword>
<keyword id="KW-0945">Host-virus interaction</keyword>
<keyword id="KW-1090">Inhibition of host innate immune response by virus</keyword>
<keyword id="KW-1114">Inhibition of host interferon signaling pathway by virus</keyword>
<keyword id="KW-1089">Inhibition of host MDA5 by virus</keyword>
<keyword id="KW-1113">Inhibition of host RLR pathway by virus</keyword>
<keyword id="KW-1105">Inhibition of host STAT1 by virus</keyword>
<keyword id="KW-0922">Interferon antiviral system evasion</keyword>
<keyword id="KW-0479">Metal-binding</keyword>
<keyword id="KW-1185">Reference proteome</keyword>
<keyword id="KW-0691">RNA editing</keyword>
<keyword id="KW-0899">Viral immunoevasion</keyword>
<keyword id="KW-0862">Zinc</keyword>
<organism>
    <name type="scientific">Simian virus 41</name>
    <name type="common">SV41</name>
    <dbReference type="NCBI Taxonomy" id="3052561"/>
    <lineage>
        <taxon>Viruses</taxon>
        <taxon>Riboviria</taxon>
        <taxon>Orthornavirae</taxon>
        <taxon>Negarnaviricota</taxon>
        <taxon>Haploviricotina</taxon>
        <taxon>Monjiviricetes</taxon>
        <taxon>Mononegavirales</taxon>
        <taxon>Paramyxoviridae</taxon>
        <taxon>Rubulavirinae</taxon>
        <taxon>Orthorubulavirus</taxon>
    </lineage>
</organism>
<dbReference type="EMBL" id="S60811">
    <property type="protein sequence ID" value="AAB26639.1"/>
    <property type="molecule type" value="Genomic_RNA"/>
</dbReference>
<dbReference type="EMBL" id="X64275">
    <property type="protein sequence ID" value="CAA45571.1"/>
    <property type="molecule type" value="Genomic_RNA"/>
</dbReference>
<dbReference type="PIR" id="JQ2040">
    <property type="entry name" value="JQ2040"/>
</dbReference>
<dbReference type="SMR" id="P36315"/>
<dbReference type="Proteomes" id="UP000108270">
    <property type="component" value="Segment"/>
</dbReference>
<dbReference type="GO" id="GO:0030430">
    <property type="term" value="C:host cell cytoplasm"/>
    <property type="evidence" value="ECO:0007669"/>
    <property type="project" value="UniProtKB-SubCell"/>
</dbReference>
<dbReference type="GO" id="GO:0046872">
    <property type="term" value="F:metal ion binding"/>
    <property type="evidence" value="ECO:0007669"/>
    <property type="project" value="UniProtKB-KW"/>
</dbReference>
<dbReference type="GO" id="GO:0039554">
    <property type="term" value="P:symbiont-mediated suppression of host cytoplasmic pattern recognition receptor signaling pathway via inhibition of MDA-5 activity"/>
    <property type="evidence" value="ECO:0007669"/>
    <property type="project" value="UniProtKB-KW"/>
</dbReference>
<dbReference type="GO" id="GO:0039563">
    <property type="term" value="P:symbiont-mediated suppression of host JAK-STAT cascade via inhibition of STAT1 activity"/>
    <property type="evidence" value="ECO:0007669"/>
    <property type="project" value="UniProtKB-KW"/>
</dbReference>
<dbReference type="GO" id="GO:0039502">
    <property type="term" value="P:symbiont-mediated suppression of host type I interferon-mediated signaling pathway"/>
    <property type="evidence" value="ECO:0007669"/>
    <property type="project" value="UniProtKB-KW"/>
</dbReference>
<dbReference type="Gene3D" id="4.10.80.340">
    <property type="match status" value="1"/>
</dbReference>
<dbReference type="InterPro" id="IPR024279">
    <property type="entry name" value="Paramyx_V_Zn-bd"/>
</dbReference>
<dbReference type="InterPro" id="IPR025909">
    <property type="entry name" value="Soyouz_module"/>
</dbReference>
<dbReference type="Pfam" id="PF14313">
    <property type="entry name" value="Soyouz_module"/>
    <property type="match status" value="1"/>
</dbReference>
<dbReference type="Pfam" id="PF13008">
    <property type="entry name" value="zf-Paramyx-P"/>
    <property type="match status" value="1"/>
</dbReference>
<proteinExistence type="inferred from homology"/>
<organismHost>
    <name type="scientific">Simiiformes</name>
    <dbReference type="NCBI Taxonomy" id="314293"/>
</organismHost>